<organism>
    <name type="scientific">Rattus norvegicus</name>
    <name type="common">Rat</name>
    <dbReference type="NCBI Taxonomy" id="10116"/>
    <lineage>
        <taxon>Eukaryota</taxon>
        <taxon>Metazoa</taxon>
        <taxon>Chordata</taxon>
        <taxon>Craniata</taxon>
        <taxon>Vertebrata</taxon>
        <taxon>Euteleostomi</taxon>
        <taxon>Mammalia</taxon>
        <taxon>Eutheria</taxon>
        <taxon>Euarchontoglires</taxon>
        <taxon>Glires</taxon>
        <taxon>Rodentia</taxon>
        <taxon>Myomorpha</taxon>
        <taxon>Muroidea</taxon>
        <taxon>Muridae</taxon>
        <taxon>Murinae</taxon>
        <taxon>Rattus</taxon>
    </lineage>
</organism>
<reference key="1">
    <citation type="journal article" date="2004" name="Nature">
        <title>Genome sequence of the Brown Norway rat yields insights into mammalian evolution.</title>
        <authorList>
            <person name="Gibbs R.A."/>
            <person name="Weinstock G.M."/>
            <person name="Metzker M.L."/>
            <person name="Muzny D.M."/>
            <person name="Sodergren E.J."/>
            <person name="Scherer S."/>
            <person name="Scott G."/>
            <person name="Steffen D."/>
            <person name="Worley K.C."/>
            <person name="Burch P.E."/>
            <person name="Okwuonu G."/>
            <person name="Hines S."/>
            <person name="Lewis L."/>
            <person name="Deramo C."/>
            <person name="Delgado O."/>
            <person name="Dugan-Rocha S."/>
            <person name="Miner G."/>
            <person name="Morgan M."/>
            <person name="Hawes A."/>
            <person name="Gill R."/>
            <person name="Holt R.A."/>
            <person name="Adams M.D."/>
            <person name="Amanatides P.G."/>
            <person name="Baden-Tillson H."/>
            <person name="Barnstead M."/>
            <person name="Chin S."/>
            <person name="Evans C.A."/>
            <person name="Ferriera S."/>
            <person name="Fosler C."/>
            <person name="Glodek A."/>
            <person name="Gu Z."/>
            <person name="Jennings D."/>
            <person name="Kraft C.L."/>
            <person name="Nguyen T."/>
            <person name="Pfannkoch C.M."/>
            <person name="Sitter C."/>
            <person name="Sutton G.G."/>
            <person name="Venter J.C."/>
            <person name="Woodage T."/>
            <person name="Smith D."/>
            <person name="Lee H.-M."/>
            <person name="Gustafson E."/>
            <person name="Cahill P."/>
            <person name="Kana A."/>
            <person name="Doucette-Stamm L."/>
            <person name="Weinstock K."/>
            <person name="Fechtel K."/>
            <person name="Weiss R.B."/>
            <person name="Dunn D.M."/>
            <person name="Green E.D."/>
            <person name="Blakesley R.W."/>
            <person name="Bouffard G.G."/>
            <person name="De Jong P.J."/>
            <person name="Osoegawa K."/>
            <person name="Zhu B."/>
            <person name="Marra M."/>
            <person name="Schein J."/>
            <person name="Bosdet I."/>
            <person name="Fjell C."/>
            <person name="Jones S."/>
            <person name="Krzywinski M."/>
            <person name="Mathewson C."/>
            <person name="Siddiqui A."/>
            <person name="Wye N."/>
            <person name="McPherson J."/>
            <person name="Zhao S."/>
            <person name="Fraser C.M."/>
            <person name="Shetty J."/>
            <person name="Shatsman S."/>
            <person name="Geer K."/>
            <person name="Chen Y."/>
            <person name="Abramzon S."/>
            <person name="Nierman W.C."/>
            <person name="Havlak P.H."/>
            <person name="Chen R."/>
            <person name="Durbin K.J."/>
            <person name="Egan A."/>
            <person name="Ren Y."/>
            <person name="Song X.-Z."/>
            <person name="Li B."/>
            <person name="Liu Y."/>
            <person name="Qin X."/>
            <person name="Cawley S."/>
            <person name="Cooney A.J."/>
            <person name="D'Souza L.M."/>
            <person name="Martin K."/>
            <person name="Wu J.Q."/>
            <person name="Gonzalez-Garay M.L."/>
            <person name="Jackson A.R."/>
            <person name="Kalafus K.J."/>
            <person name="McLeod M.P."/>
            <person name="Milosavljevic A."/>
            <person name="Virk D."/>
            <person name="Volkov A."/>
            <person name="Wheeler D.A."/>
            <person name="Zhang Z."/>
            <person name="Bailey J.A."/>
            <person name="Eichler E.E."/>
            <person name="Tuzun E."/>
            <person name="Birney E."/>
            <person name="Mongin E."/>
            <person name="Ureta-Vidal A."/>
            <person name="Woodwark C."/>
            <person name="Zdobnov E."/>
            <person name="Bork P."/>
            <person name="Suyama M."/>
            <person name="Torrents D."/>
            <person name="Alexandersson M."/>
            <person name="Trask B.J."/>
            <person name="Young J.M."/>
            <person name="Huang H."/>
            <person name="Wang H."/>
            <person name="Xing H."/>
            <person name="Daniels S."/>
            <person name="Gietzen D."/>
            <person name="Schmidt J."/>
            <person name="Stevens K."/>
            <person name="Vitt U."/>
            <person name="Wingrove J."/>
            <person name="Camara F."/>
            <person name="Mar Alba M."/>
            <person name="Abril J.F."/>
            <person name="Guigo R."/>
            <person name="Smit A."/>
            <person name="Dubchak I."/>
            <person name="Rubin E.M."/>
            <person name="Couronne O."/>
            <person name="Poliakov A."/>
            <person name="Huebner N."/>
            <person name="Ganten D."/>
            <person name="Goesele C."/>
            <person name="Hummel O."/>
            <person name="Kreitler T."/>
            <person name="Lee Y.-A."/>
            <person name="Monti J."/>
            <person name="Schulz H."/>
            <person name="Zimdahl H."/>
            <person name="Himmelbauer H."/>
            <person name="Lehrach H."/>
            <person name="Jacob H.J."/>
            <person name="Bromberg S."/>
            <person name="Gullings-Handley J."/>
            <person name="Jensen-Seaman M.I."/>
            <person name="Kwitek A.E."/>
            <person name="Lazar J."/>
            <person name="Pasko D."/>
            <person name="Tonellato P.J."/>
            <person name="Twigger S."/>
            <person name="Ponting C.P."/>
            <person name="Duarte J.M."/>
            <person name="Rice S."/>
            <person name="Goodstadt L."/>
            <person name="Beatson S.A."/>
            <person name="Emes R.D."/>
            <person name="Winter E.E."/>
            <person name="Webber C."/>
            <person name="Brandt P."/>
            <person name="Nyakatura G."/>
            <person name="Adetobi M."/>
            <person name="Chiaromonte F."/>
            <person name="Elnitski L."/>
            <person name="Eswara P."/>
            <person name="Hardison R.C."/>
            <person name="Hou M."/>
            <person name="Kolbe D."/>
            <person name="Makova K."/>
            <person name="Miller W."/>
            <person name="Nekrutenko A."/>
            <person name="Riemer C."/>
            <person name="Schwartz S."/>
            <person name="Taylor J."/>
            <person name="Yang S."/>
            <person name="Zhang Y."/>
            <person name="Lindpaintner K."/>
            <person name="Andrews T.D."/>
            <person name="Caccamo M."/>
            <person name="Clamp M."/>
            <person name="Clarke L."/>
            <person name="Curwen V."/>
            <person name="Durbin R.M."/>
            <person name="Eyras E."/>
            <person name="Searle S.M."/>
            <person name="Cooper G.M."/>
            <person name="Batzoglou S."/>
            <person name="Brudno M."/>
            <person name="Sidow A."/>
            <person name="Stone E.A."/>
            <person name="Payseur B.A."/>
            <person name="Bourque G."/>
            <person name="Lopez-Otin C."/>
            <person name="Puente X.S."/>
            <person name="Chakrabarti K."/>
            <person name="Chatterji S."/>
            <person name="Dewey C."/>
            <person name="Pachter L."/>
            <person name="Bray N."/>
            <person name="Yap V.B."/>
            <person name="Caspi A."/>
            <person name="Tesler G."/>
            <person name="Pevzner P.A."/>
            <person name="Haussler D."/>
            <person name="Roskin K.M."/>
            <person name="Baertsch R."/>
            <person name="Clawson H."/>
            <person name="Furey T.S."/>
            <person name="Hinrichs A.S."/>
            <person name="Karolchik D."/>
            <person name="Kent W.J."/>
            <person name="Rosenbloom K.R."/>
            <person name="Trumbower H."/>
            <person name="Weirauch M."/>
            <person name="Cooper D.N."/>
            <person name="Stenson P.D."/>
            <person name="Ma B."/>
            <person name="Brent M."/>
            <person name="Arumugam M."/>
            <person name="Shteynberg D."/>
            <person name="Copley R.R."/>
            <person name="Taylor M.S."/>
            <person name="Riethman H."/>
            <person name="Mudunuri U."/>
            <person name="Peterson J."/>
            <person name="Guyer M."/>
            <person name="Felsenfeld A."/>
            <person name="Old S."/>
            <person name="Mockrin S."/>
            <person name="Collins F.S."/>
        </authorList>
    </citation>
    <scope>NUCLEOTIDE SEQUENCE [LARGE SCALE GENOMIC DNA]</scope>
    <source>
        <strain>Brown Norway</strain>
    </source>
</reference>
<reference key="2">
    <citation type="submission" date="2005-07" db="EMBL/GenBank/DDBJ databases">
        <authorList>
            <person name="Mural R.J."/>
            <person name="Adams M.D."/>
            <person name="Myers E.W."/>
            <person name="Smith H.O."/>
            <person name="Venter J.C."/>
        </authorList>
    </citation>
    <scope>NUCLEOTIDE SEQUENCE [LARGE SCALE GENOMIC DNA]</scope>
</reference>
<reference key="3">
    <citation type="journal article" date="2002" name="Biochim. Biophys. Acta">
        <title>ABCG4: a novel human white family ABC-transporter expressed in the brain and eye.</title>
        <authorList>
            <person name="Oldfield S."/>
            <person name="Lowry C."/>
            <person name="Ruddick J."/>
            <person name="Lightman S."/>
        </authorList>
    </citation>
    <scope>TISSUE SPECIFICITY</scope>
    <source>
        <tissue>Spinal ganglion</tissue>
    </source>
</reference>
<reference key="4">
    <citation type="journal article" date="2012" name="J. Neurosci. Res.">
        <title>Liver X receptors regulate cholesterol homeostasis in oligodendrocytes.</title>
        <authorList>
            <person name="Nelissen K."/>
            <person name="Mulder M."/>
            <person name="Smets I."/>
            <person name="Timmermans S."/>
            <person name="Smeets K."/>
            <person name="Ameloot M."/>
            <person name="Hendriks J.J."/>
        </authorList>
    </citation>
    <scope>TISSUE SPECIFICITY</scope>
    <scope>MISCELLANEOUS</scope>
</reference>
<proteinExistence type="evidence at transcript level"/>
<name>ABCG4_RAT</name>
<protein>
    <recommendedName>
        <fullName>ATP-binding cassette subfamily G member 4</fullName>
        <ecNumber evidence="1">7.6.2.-</ecNumber>
    </recommendedName>
    <alternativeName>
        <fullName evidence="7">ATP-binding cassette, sub-family G (WHITE), member 4</fullName>
    </alternativeName>
</protein>
<accession>D3ZCM3</accession>
<gene>
    <name evidence="9" type="primary">Abcg4</name>
</gene>
<comment type="function">
    <text evidence="1 2">ATP-dependent transporter of the ATP-binding cassette (ABC) family that may be involved in the cellular efflux of sterols, in particular cholesterol and desmosterol (a cholesterol precursor), to high-density lipoprotein (HDL) (By similarity). May play an important role in the removal of amyloid-beta peptides from brain,in a process that can be antagonized by desmosterol. However it is unclear whether ABCG4 can directly transport amyloid-beta peptides or whether peptide export may be facilitated due to changes in the membrane lipid environment (By similarity). Induces apoptosis in various cells (By similarity).</text>
</comment>
<comment type="catalytic activity">
    <reaction evidence="1">
        <text>cholesterol(in) + ATP + H2O = cholesterol(out) + ADP + phosphate + H(+)</text>
        <dbReference type="Rhea" id="RHEA:39051"/>
        <dbReference type="ChEBI" id="CHEBI:15377"/>
        <dbReference type="ChEBI" id="CHEBI:15378"/>
        <dbReference type="ChEBI" id="CHEBI:16113"/>
        <dbReference type="ChEBI" id="CHEBI:30616"/>
        <dbReference type="ChEBI" id="CHEBI:43474"/>
        <dbReference type="ChEBI" id="CHEBI:456216"/>
    </reaction>
    <physiologicalReaction direction="left-to-right" evidence="1">
        <dbReference type="Rhea" id="RHEA:39052"/>
    </physiologicalReaction>
</comment>
<comment type="catalytic activity">
    <reaction evidence="1">
        <text>desmosterol(in) + ATP + H2O = desmosterol(out) + ADP + phosphate + H(+)</text>
        <dbReference type="Rhea" id="RHEA:67932"/>
        <dbReference type="ChEBI" id="CHEBI:15377"/>
        <dbReference type="ChEBI" id="CHEBI:15378"/>
        <dbReference type="ChEBI" id="CHEBI:17737"/>
        <dbReference type="ChEBI" id="CHEBI:30616"/>
        <dbReference type="ChEBI" id="CHEBI:43474"/>
        <dbReference type="ChEBI" id="CHEBI:456216"/>
    </reaction>
    <physiologicalReaction direction="left-to-right" evidence="1">
        <dbReference type="Rhea" id="RHEA:67933"/>
    </physiologicalReaction>
</comment>
<comment type="subunit">
    <text evidence="2">Half-transporter that form a functional transporter via homo- or heterodimerization. Homodimer. Heterodimers with ABCG1.</text>
</comment>
<comment type="subcellular location">
    <subcellularLocation>
        <location evidence="2">Cell membrane</location>
        <topology evidence="3">Multi-pass membrane protein</topology>
    </subcellularLocation>
    <subcellularLocation>
        <location evidence="1">Cytoplasmic vesicle membrane</location>
        <topology evidence="3">Multi-pass membrane protein</topology>
    </subcellularLocation>
    <subcellularLocation>
        <location evidence="1">Endosome membrane</location>
        <topology evidence="3">Multi-pass membrane protein</topology>
    </subcellularLocation>
</comment>
<comment type="tissue specificity">
    <text evidence="5 6">Expressed specifically in the brain and the eye (PubMed:12183068). Expressed in both neonatal and adult oligodendrocytes (PubMed:21972082).</text>
</comment>
<comment type="miscellaneous">
    <text evidence="1 2 6">Whether ABCG4 is an LXR target gene, is still under debate. Studies performed in monocytes, and in one astrocyte cell line indicated that ABCG4 expression could be up-regulated by oxysterols and other LXR ligands (By similarity). However, subsequent observations in a number of different cell types (primary mouse cells, oligodendrocytes and neuron-like cell lines) have not confirmed this observation (By similarity) (PubMed:21972082).</text>
</comment>
<comment type="similarity">
    <text evidence="8">Belongs to the ABC transporter superfamily. ABCG family. Eye pigment precursor importer (TC 3.A.1.204) subfamily.</text>
</comment>
<dbReference type="EC" id="7.6.2.-" evidence="1"/>
<dbReference type="EMBL" id="AC112557">
    <property type="status" value="NOT_ANNOTATED_CDS"/>
    <property type="molecule type" value="Genomic_DNA"/>
</dbReference>
<dbReference type="EMBL" id="CH473975">
    <property type="protein sequence ID" value="EDL95289.1"/>
    <property type="molecule type" value="Genomic_DNA"/>
</dbReference>
<dbReference type="RefSeq" id="NP_001100286.1">
    <property type="nucleotide sequence ID" value="NM_001106816.1"/>
</dbReference>
<dbReference type="SMR" id="D3ZCM3"/>
<dbReference type="FunCoup" id="D3ZCM3">
    <property type="interactions" value="1908"/>
</dbReference>
<dbReference type="STRING" id="10116.ENSRNOP00000012534"/>
<dbReference type="PhosphoSitePlus" id="D3ZCM3"/>
<dbReference type="PaxDb" id="10116-ENSRNOP00000012534"/>
<dbReference type="GeneID" id="300664"/>
<dbReference type="KEGG" id="rno:300664"/>
<dbReference type="AGR" id="RGD:1305840"/>
<dbReference type="CTD" id="64137"/>
<dbReference type="RGD" id="1305840">
    <property type="gene designation" value="Abcg4"/>
</dbReference>
<dbReference type="VEuPathDB" id="HostDB:ENSRNOG00000008862"/>
<dbReference type="eggNOG" id="KOG0061">
    <property type="taxonomic scope" value="Eukaryota"/>
</dbReference>
<dbReference type="HOGENOM" id="CLU_000604_57_6_1"/>
<dbReference type="InParanoid" id="D3ZCM3"/>
<dbReference type="PhylomeDB" id="D3ZCM3"/>
<dbReference type="TreeFam" id="TF105210"/>
<dbReference type="Reactome" id="R-RNO-1369062">
    <property type="pathway name" value="ABC transporters in lipid homeostasis"/>
</dbReference>
<dbReference type="PRO" id="PR:D3ZCM3"/>
<dbReference type="Proteomes" id="UP000002494">
    <property type="component" value="Chromosome 8"/>
</dbReference>
<dbReference type="Proteomes" id="UP000234681">
    <property type="component" value="Chromosome 8"/>
</dbReference>
<dbReference type="Bgee" id="ENSRNOG00000008862">
    <property type="expression patterns" value="Expressed in frontal cortex and 15 other cell types or tissues"/>
</dbReference>
<dbReference type="GO" id="GO:0031410">
    <property type="term" value="C:cytoplasmic vesicle"/>
    <property type="evidence" value="ECO:0000250"/>
    <property type="project" value="UniProtKB"/>
</dbReference>
<dbReference type="GO" id="GO:0005768">
    <property type="term" value="C:endosome"/>
    <property type="evidence" value="ECO:0000266"/>
    <property type="project" value="RGD"/>
</dbReference>
<dbReference type="GO" id="GO:0010008">
    <property type="term" value="C:endosome membrane"/>
    <property type="evidence" value="ECO:0000250"/>
    <property type="project" value="UniProtKB"/>
</dbReference>
<dbReference type="GO" id="GO:0005886">
    <property type="term" value="C:plasma membrane"/>
    <property type="evidence" value="ECO:0000250"/>
    <property type="project" value="UniProtKB"/>
</dbReference>
<dbReference type="GO" id="GO:0034041">
    <property type="term" value="F:ABC-type sterol transporter activity"/>
    <property type="evidence" value="ECO:0000250"/>
    <property type="project" value="UniProtKB"/>
</dbReference>
<dbReference type="GO" id="GO:0005524">
    <property type="term" value="F:ATP binding"/>
    <property type="evidence" value="ECO:0007669"/>
    <property type="project" value="UniProtKB-KW"/>
</dbReference>
<dbReference type="GO" id="GO:0016887">
    <property type="term" value="F:ATP hydrolysis activity"/>
    <property type="evidence" value="ECO:0000250"/>
    <property type="project" value="UniProtKB"/>
</dbReference>
<dbReference type="GO" id="GO:0042802">
    <property type="term" value="F:identical protein binding"/>
    <property type="evidence" value="ECO:0000250"/>
    <property type="project" value="UniProtKB"/>
</dbReference>
<dbReference type="GO" id="GO:0046982">
    <property type="term" value="F:protein heterodimerization activity"/>
    <property type="evidence" value="ECO:0000266"/>
    <property type="project" value="RGD"/>
</dbReference>
<dbReference type="GO" id="GO:0042803">
    <property type="term" value="F:protein homodimerization activity"/>
    <property type="evidence" value="ECO:0000266"/>
    <property type="project" value="RGD"/>
</dbReference>
<dbReference type="GO" id="GO:0071403">
    <property type="term" value="P:cellular response to high density lipoprotein particle stimulus"/>
    <property type="evidence" value="ECO:0000266"/>
    <property type="project" value="RGD"/>
</dbReference>
<dbReference type="GO" id="GO:1990830">
    <property type="term" value="P:cellular response to leukemia inhibitory factor"/>
    <property type="evidence" value="ECO:0000266"/>
    <property type="project" value="RGD"/>
</dbReference>
<dbReference type="GO" id="GO:0033344">
    <property type="term" value="P:cholesterol efflux"/>
    <property type="evidence" value="ECO:0000250"/>
    <property type="project" value="UniProtKB"/>
</dbReference>
<dbReference type="GO" id="GO:0042632">
    <property type="term" value="P:cholesterol homeostasis"/>
    <property type="evidence" value="ECO:0000250"/>
    <property type="project" value="UniProtKB"/>
</dbReference>
<dbReference type="GO" id="GO:0045542">
    <property type="term" value="P:positive regulation of cholesterol biosynthetic process"/>
    <property type="evidence" value="ECO:0000266"/>
    <property type="project" value="RGD"/>
</dbReference>
<dbReference type="GO" id="GO:0010875">
    <property type="term" value="P:positive regulation of cholesterol efflux"/>
    <property type="evidence" value="ECO:0000266"/>
    <property type="project" value="RGD"/>
</dbReference>
<dbReference type="GO" id="GO:0006355">
    <property type="term" value="P:regulation of DNA-templated transcription"/>
    <property type="evidence" value="ECO:0000266"/>
    <property type="project" value="RGD"/>
</dbReference>
<dbReference type="GO" id="GO:0015918">
    <property type="term" value="P:sterol transport"/>
    <property type="evidence" value="ECO:0000250"/>
    <property type="project" value="UniProtKB"/>
</dbReference>
<dbReference type="GO" id="GO:0055085">
    <property type="term" value="P:transmembrane transport"/>
    <property type="evidence" value="ECO:0000318"/>
    <property type="project" value="GO_Central"/>
</dbReference>
<dbReference type="CDD" id="cd03213">
    <property type="entry name" value="ABCG_EPDR"/>
    <property type="match status" value="1"/>
</dbReference>
<dbReference type="FunFam" id="3.40.50.300:FF:000267">
    <property type="entry name" value="ATP-binding cassette, sub-family G (WHITE), member 1"/>
    <property type="match status" value="1"/>
</dbReference>
<dbReference type="Gene3D" id="3.40.50.300">
    <property type="entry name" value="P-loop containing nucleotide triphosphate hydrolases"/>
    <property type="match status" value="1"/>
</dbReference>
<dbReference type="InterPro" id="IPR003593">
    <property type="entry name" value="AAA+_ATPase"/>
</dbReference>
<dbReference type="InterPro" id="IPR013525">
    <property type="entry name" value="ABC2_TM"/>
</dbReference>
<dbReference type="InterPro" id="IPR003439">
    <property type="entry name" value="ABC_transporter-like_ATP-bd"/>
</dbReference>
<dbReference type="InterPro" id="IPR017871">
    <property type="entry name" value="ABC_transporter-like_CS"/>
</dbReference>
<dbReference type="InterPro" id="IPR043926">
    <property type="entry name" value="ABCG_dom"/>
</dbReference>
<dbReference type="InterPro" id="IPR050352">
    <property type="entry name" value="ABCG_transporters"/>
</dbReference>
<dbReference type="InterPro" id="IPR027417">
    <property type="entry name" value="P-loop_NTPase"/>
</dbReference>
<dbReference type="PANTHER" id="PTHR48041">
    <property type="entry name" value="ABC TRANSPORTER G FAMILY MEMBER 28"/>
    <property type="match status" value="1"/>
</dbReference>
<dbReference type="PANTHER" id="PTHR48041:SF75">
    <property type="entry name" value="ATP-BINDING CASSETTE SUB-FAMILY G MEMBER 4"/>
    <property type="match status" value="1"/>
</dbReference>
<dbReference type="Pfam" id="PF01061">
    <property type="entry name" value="ABC2_membrane"/>
    <property type="match status" value="1"/>
</dbReference>
<dbReference type="Pfam" id="PF19055">
    <property type="entry name" value="ABC2_membrane_7"/>
    <property type="match status" value="1"/>
</dbReference>
<dbReference type="Pfam" id="PF00005">
    <property type="entry name" value="ABC_tran"/>
    <property type="match status" value="1"/>
</dbReference>
<dbReference type="SMART" id="SM00382">
    <property type="entry name" value="AAA"/>
    <property type="match status" value="1"/>
</dbReference>
<dbReference type="SUPFAM" id="SSF52540">
    <property type="entry name" value="P-loop containing nucleoside triphosphate hydrolases"/>
    <property type="match status" value="1"/>
</dbReference>
<dbReference type="PROSITE" id="PS00211">
    <property type="entry name" value="ABC_TRANSPORTER_1"/>
    <property type="match status" value="1"/>
</dbReference>
<dbReference type="PROSITE" id="PS50893">
    <property type="entry name" value="ABC_TRANSPORTER_2"/>
    <property type="match status" value="1"/>
</dbReference>
<sequence>MAEKALEAVGCGLGPGAVAMAVALEDGAEPPVLTTHLKKVENHITEAQRFSHLPKRSAVDIEFVELSYSVREGPCWRKRGYKTLLKCLSGKFCRRELIGIMGPSGAGKSTFMNILAGYRESGMKGQILVNGRPRDLRTFRKMSCYIMQDDMLLPHLTVLEAMMVSANLKLSEKQEVKKELVTEILTALGLMSCSHTRTALLSGGQRKRLAIALELVNNPPVMFFDEPTSGLDSASCFQVVSLMKSLAHGGRTVICTIHQPSAKLFEMFDKLYILSQGQCIFKGVVTNLIPYLKGLGLHCPTYHNPADFIIEVASGEYGDLNPMLFRAVQNGLCTMAEKKSSPEKNEVPAHCPTCPPELDPIESHTFATSTLTQFCILFRRTFLSILRDTVLTHLRFMSHVLIGVLIGLLYLHIGDDASKVFNNTGFLFFSMLFLMFAALMPTVLTCELICLAKMAVFMREHLNYWYSLKAYYLAKTMADVPFQVVCPVVYCSIVYWMTGQPAETSRFLLFSALSIATALVAQSLGLLIGAASTSLQVATFVGPVTAIPVLLFSGFFVSFKTIPTYLQWSSYLSYVRYGFEGLILTIYGMERGHLTCLEDHCPFRDPQIILHELDVEEAKLYMDFLVLGIFFLALRLLAYLVLRYRVKSER</sequence>
<feature type="chain" id="PRO_0000453166" description="ATP-binding cassette subfamily G member 4">
    <location>
        <begin position="1"/>
        <end position="650"/>
    </location>
</feature>
<feature type="topological domain" description="Cytoplasmic" evidence="3">
    <location>
        <begin position="1"/>
        <end position="393"/>
    </location>
</feature>
<feature type="transmembrane region" description="Helical; Name=1" evidence="3">
    <location>
        <begin position="394"/>
        <end position="414"/>
    </location>
</feature>
<feature type="topological domain" description="Extracellular" evidence="3">
    <location>
        <begin position="415"/>
        <end position="423"/>
    </location>
</feature>
<feature type="transmembrane region" description="Helical; Name=2" evidence="3">
    <location>
        <begin position="424"/>
        <end position="444"/>
    </location>
</feature>
<feature type="topological domain" description="Cytoplasmic" evidence="3">
    <location>
        <begin position="445"/>
        <end position="476"/>
    </location>
</feature>
<feature type="transmembrane region" description="Helical; Name=3" evidence="3">
    <location>
        <begin position="477"/>
        <end position="497"/>
    </location>
</feature>
<feature type="topological domain" description="Extracellular" evidence="3">
    <location>
        <begin position="498"/>
        <end position="507"/>
    </location>
</feature>
<feature type="transmembrane region" description="Helical; Name=4" evidence="3">
    <location>
        <begin position="508"/>
        <end position="528"/>
    </location>
</feature>
<feature type="topological domain" description="Cytoplasmic" evidence="3">
    <location>
        <begin position="529"/>
        <end position="536"/>
    </location>
</feature>
<feature type="transmembrane region" description="Helical; Name=5" evidence="3">
    <location>
        <begin position="537"/>
        <end position="557"/>
    </location>
</feature>
<feature type="topological domain" description="Extracellular" evidence="3">
    <location>
        <begin position="558"/>
        <end position="621"/>
    </location>
</feature>
<feature type="transmembrane region" description="Helical; Name=6" evidence="3">
    <location>
        <begin position="622"/>
        <end position="642"/>
    </location>
</feature>
<feature type="topological domain" description="Cytoplasmic" evidence="3">
    <location>
        <begin position="643"/>
        <end position="650"/>
    </location>
</feature>
<feature type="domain" description="ABC transporter" evidence="4">
    <location>
        <begin position="61"/>
        <end position="301"/>
    </location>
</feature>
<feature type="binding site" evidence="4">
    <location>
        <begin position="102"/>
        <end position="109"/>
    </location>
    <ligand>
        <name>ATP</name>
        <dbReference type="ChEBI" id="CHEBI:30616"/>
    </ligand>
</feature>
<evidence type="ECO:0000250" key="1">
    <source>
        <dbReference type="UniProtKB" id="Q91WA9"/>
    </source>
</evidence>
<evidence type="ECO:0000250" key="2">
    <source>
        <dbReference type="UniProtKB" id="Q9H172"/>
    </source>
</evidence>
<evidence type="ECO:0000255" key="3"/>
<evidence type="ECO:0000255" key="4">
    <source>
        <dbReference type="PROSITE-ProRule" id="PRU00434"/>
    </source>
</evidence>
<evidence type="ECO:0000269" key="5">
    <source>
    </source>
</evidence>
<evidence type="ECO:0000269" key="6">
    <source>
    </source>
</evidence>
<evidence type="ECO:0000303" key="7">
    <source ref="2"/>
</evidence>
<evidence type="ECO:0000305" key="8"/>
<evidence type="ECO:0000312" key="9">
    <source>
        <dbReference type="RGD" id="1305840"/>
    </source>
</evidence>
<keyword id="KW-0067">ATP-binding</keyword>
<keyword id="KW-1003">Cell membrane</keyword>
<keyword id="KW-0968">Cytoplasmic vesicle</keyword>
<keyword id="KW-0967">Endosome</keyword>
<keyword id="KW-0472">Membrane</keyword>
<keyword id="KW-0547">Nucleotide-binding</keyword>
<keyword id="KW-1185">Reference proteome</keyword>
<keyword id="KW-1278">Translocase</keyword>
<keyword id="KW-0812">Transmembrane</keyword>
<keyword id="KW-1133">Transmembrane helix</keyword>
<keyword id="KW-0813">Transport</keyword>